<sequence>MPAKTTSARLTHLDDAGLPTMVDVSDKQVTARSATAESRVHFPAAVAAQLRANGLRSAKGGIVETAVIAGTMAVKRTHELIPFCHPLPIDGCRFEIDWAGAQVLQIVCTVRCVHRTGVEMEALTGASVAALTVYDMCKALSHTMRIGPTKLLSKRGGKRDIGAAR</sequence>
<feature type="chain" id="PRO_1000054162" description="Cyclic pyranopterin monophosphate synthase">
    <location>
        <begin position="1"/>
        <end position="165"/>
    </location>
</feature>
<feature type="active site" evidence="1">
    <location>
        <position position="135"/>
    </location>
</feature>
<feature type="binding site" evidence="1">
    <location>
        <begin position="83"/>
        <end position="85"/>
    </location>
    <ligand>
        <name>substrate</name>
    </ligand>
</feature>
<feature type="binding site" evidence="1">
    <location>
        <begin position="120"/>
        <end position="121"/>
    </location>
    <ligand>
        <name>substrate</name>
    </ligand>
</feature>
<comment type="function">
    <text evidence="1">Catalyzes the conversion of (8S)-3',8-cyclo-7,8-dihydroguanosine 5'-triphosphate to cyclic pyranopterin monophosphate (cPMP).</text>
</comment>
<comment type="catalytic activity">
    <reaction evidence="1">
        <text>(8S)-3',8-cyclo-7,8-dihydroguanosine 5'-triphosphate = cyclic pyranopterin phosphate + diphosphate</text>
        <dbReference type="Rhea" id="RHEA:49580"/>
        <dbReference type="ChEBI" id="CHEBI:33019"/>
        <dbReference type="ChEBI" id="CHEBI:59648"/>
        <dbReference type="ChEBI" id="CHEBI:131766"/>
        <dbReference type="EC" id="4.6.1.17"/>
    </reaction>
</comment>
<comment type="pathway">
    <text evidence="1">Cofactor biosynthesis; molybdopterin biosynthesis.</text>
</comment>
<comment type="subunit">
    <text evidence="1">Homohexamer; trimer of dimers.</text>
</comment>
<comment type="similarity">
    <text evidence="1">Belongs to the MoaC family.</text>
</comment>
<dbReference type="EC" id="4.6.1.17" evidence="1"/>
<dbReference type="EMBL" id="CP000050">
    <property type="protein sequence ID" value="AAY50291.1"/>
    <property type="molecule type" value="Genomic_DNA"/>
</dbReference>
<dbReference type="RefSeq" id="WP_011036201.1">
    <property type="nucleotide sequence ID" value="NZ_CP155948.1"/>
</dbReference>
<dbReference type="SMR" id="Q4URN2"/>
<dbReference type="KEGG" id="xcb:XC_3247"/>
<dbReference type="HOGENOM" id="CLU_074693_1_0_6"/>
<dbReference type="UniPathway" id="UPA00344"/>
<dbReference type="Proteomes" id="UP000000420">
    <property type="component" value="Chromosome"/>
</dbReference>
<dbReference type="GO" id="GO:0061799">
    <property type="term" value="F:cyclic pyranopterin monophosphate synthase activity"/>
    <property type="evidence" value="ECO:0007669"/>
    <property type="project" value="UniProtKB-UniRule"/>
</dbReference>
<dbReference type="GO" id="GO:0006777">
    <property type="term" value="P:Mo-molybdopterin cofactor biosynthetic process"/>
    <property type="evidence" value="ECO:0007669"/>
    <property type="project" value="UniProtKB-UniRule"/>
</dbReference>
<dbReference type="CDD" id="cd01420">
    <property type="entry name" value="MoaC_PE"/>
    <property type="match status" value="1"/>
</dbReference>
<dbReference type="Gene3D" id="3.30.70.640">
    <property type="entry name" value="Molybdopterin cofactor biosynthesis C (MoaC) domain"/>
    <property type="match status" value="1"/>
</dbReference>
<dbReference type="HAMAP" id="MF_01224_B">
    <property type="entry name" value="MoaC_B"/>
    <property type="match status" value="1"/>
</dbReference>
<dbReference type="InterPro" id="IPR023045">
    <property type="entry name" value="MoaC"/>
</dbReference>
<dbReference type="InterPro" id="IPR047594">
    <property type="entry name" value="MoaC_bact/euk"/>
</dbReference>
<dbReference type="InterPro" id="IPR036522">
    <property type="entry name" value="MoaC_sf"/>
</dbReference>
<dbReference type="InterPro" id="IPR002820">
    <property type="entry name" value="Mopterin_CF_biosynth-C_dom"/>
</dbReference>
<dbReference type="NCBIfam" id="TIGR00581">
    <property type="entry name" value="moaC"/>
    <property type="match status" value="1"/>
</dbReference>
<dbReference type="NCBIfam" id="NF006870">
    <property type="entry name" value="PRK09364.1"/>
    <property type="match status" value="1"/>
</dbReference>
<dbReference type="Pfam" id="PF01967">
    <property type="entry name" value="MoaC"/>
    <property type="match status" value="1"/>
</dbReference>
<dbReference type="SUPFAM" id="SSF55040">
    <property type="entry name" value="Molybdenum cofactor biosynthesis protein C, MoaC"/>
    <property type="match status" value="1"/>
</dbReference>
<gene>
    <name evidence="1" type="primary">moaC</name>
    <name type="ordered locus">XC_3247</name>
</gene>
<protein>
    <recommendedName>
        <fullName evidence="1">Cyclic pyranopterin monophosphate synthase</fullName>
        <ecNumber evidence="1">4.6.1.17</ecNumber>
    </recommendedName>
    <alternativeName>
        <fullName evidence="1">Molybdenum cofactor biosynthesis protein C</fullName>
    </alternativeName>
</protein>
<accession>Q4URN2</accession>
<organism>
    <name type="scientific">Xanthomonas campestris pv. campestris (strain 8004)</name>
    <dbReference type="NCBI Taxonomy" id="314565"/>
    <lineage>
        <taxon>Bacteria</taxon>
        <taxon>Pseudomonadati</taxon>
        <taxon>Pseudomonadota</taxon>
        <taxon>Gammaproteobacteria</taxon>
        <taxon>Lysobacterales</taxon>
        <taxon>Lysobacteraceae</taxon>
        <taxon>Xanthomonas</taxon>
    </lineage>
</organism>
<proteinExistence type="inferred from homology"/>
<name>MOAC_XANC8</name>
<reference key="1">
    <citation type="journal article" date="2005" name="Genome Res.">
        <title>Comparative and functional genomic analyses of the pathogenicity of phytopathogen Xanthomonas campestris pv. campestris.</title>
        <authorList>
            <person name="Qian W."/>
            <person name="Jia Y."/>
            <person name="Ren S.-X."/>
            <person name="He Y.-Q."/>
            <person name="Feng J.-X."/>
            <person name="Lu L.-F."/>
            <person name="Sun Q."/>
            <person name="Ying G."/>
            <person name="Tang D.-J."/>
            <person name="Tang H."/>
            <person name="Wu W."/>
            <person name="Hao P."/>
            <person name="Wang L."/>
            <person name="Jiang B.-L."/>
            <person name="Zeng S."/>
            <person name="Gu W.-Y."/>
            <person name="Lu G."/>
            <person name="Rong L."/>
            <person name="Tian Y."/>
            <person name="Yao Z."/>
            <person name="Fu G."/>
            <person name="Chen B."/>
            <person name="Fang R."/>
            <person name="Qiang B."/>
            <person name="Chen Z."/>
            <person name="Zhao G.-P."/>
            <person name="Tang J.-L."/>
            <person name="He C."/>
        </authorList>
    </citation>
    <scope>NUCLEOTIDE SEQUENCE [LARGE SCALE GENOMIC DNA]</scope>
    <source>
        <strain>8004</strain>
    </source>
</reference>
<evidence type="ECO:0000255" key="1">
    <source>
        <dbReference type="HAMAP-Rule" id="MF_01224"/>
    </source>
</evidence>
<keyword id="KW-0456">Lyase</keyword>
<keyword id="KW-0501">Molybdenum cofactor biosynthesis</keyword>